<accession>B1J0Z2</accession>
<feature type="chain" id="PRO_1000081059" description="Glutamate 5-kinase">
    <location>
        <begin position="1"/>
        <end position="367"/>
    </location>
</feature>
<feature type="domain" description="PUA" evidence="1">
    <location>
        <begin position="275"/>
        <end position="353"/>
    </location>
</feature>
<feature type="binding site" evidence="1">
    <location>
        <position position="10"/>
    </location>
    <ligand>
        <name>ATP</name>
        <dbReference type="ChEBI" id="CHEBI:30616"/>
    </ligand>
</feature>
<feature type="binding site" evidence="1">
    <location>
        <position position="50"/>
    </location>
    <ligand>
        <name>substrate</name>
    </ligand>
</feature>
<feature type="binding site" evidence="1">
    <location>
        <position position="137"/>
    </location>
    <ligand>
        <name>substrate</name>
    </ligand>
</feature>
<feature type="binding site" evidence="1">
    <location>
        <position position="149"/>
    </location>
    <ligand>
        <name>substrate</name>
    </ligand>
</feature>
<feature type="binding site" evidence="1">
    <location>
        <begin position="169"/>
        <end position="170"/>
    </location>
    <ligand>
        <name>ATP</name>
        <dbReference type="ChEBI" id="CHEBI:30616"/>
    </ligand>
</feature>
<feature type="binding site" evidence="1">
    <location>
        <begin position="211"/>
        <end position="217"/>
    </location>
    <ligand>
        <name>ATP</name>
        <dbReference type="ChEBI" id="CHEBI:30616"/>
    </ligand>
</feature>
<keyword id="KW-0028">Amino-acid biosynthesis</keyword>
<keyword id="KW-0067">ATP-binding</keyword>
<keyword id="KW-0963">Cytoplasm</keyword>
<keyword id="KW-0418">Kinase</keyword>
<keyword id="KW-0547">Nucleotide-binding</keyword>
<keyword id="KW-0641">Proline biosynthesis</keyword>
<keyword id="KW-0808">Transferase</keyword>
<name>PROB_ECOLC</name>
<evidence type="ECO:0000255" key="1">
    <source>
        <dbReference type="HAMAP-Rule" id="MF_00456"/>
    </source>
</evidence>
<reference key="1">
    <citation type="submission" date="2008-02" db="EMBL/GenBank/DDBJ databases">
        <title>Complete sequence of Escherichia coli C str. ATCC 8739.</title>
        <authorList>
            <person name="Copeland A."/>
            <person name="Lucas S."/>
            <person name="Lapidus A."/>
            <person name="Glavina del Rio T."/>
            <person name="Dalin E."/>
            <person name="Tice H."/>
            <person name="Bruce D."/>
            <person name="Goodwin L."/>
            <person name="Pitluck S."/>
            <person name="Kiss H."/>
            <person name="Brettin T."/>
            <person name="Detter J.C."/>
            <person name="Han C."/>
            <person name="Kuske C.R."/>
            <person name="Schmutz J."/>
            <person name="Larimer F."/>
            <person name="Land M."/>
            <person name="Hauser L."/>
            <person name="Kyrpides N."/>
            <person name="Mikhailova N."/>
            <person name="Ingram L."/>
            <person name="Richardson P."/>
        </authorList>
    </citation>
    <scope>NUCLEOTIDE SEQUENCE [LARGE SCALE GENOMIC DNA]</scope>
    <source>
        <strain>ATCC 8739 / DSM 1576 / NBRC 3972 / NCIMB 8545 / WDCM 00012 / Crooks</strain>
    </source>
</reference>
<comment type="function">
    <text evidence="1">Catalyzes the transfer of a phosphate group to glutamate to form L-glutamate 5-phosphate.</text>
</comment>
<comment type="catalytic activity">
    <reaction evidence="1">
        <text>L-glutamate + ATP = L-glutamyl 5-phosphate + ADP</text>
        <dbReference type="Rhea" id="RHEA:14877"/>
        <dbReference type="ChEBI" id="CHEBI:29985"/>
        <dbReference type="ChEBI" id="CHEBI:30616"/>
        <dbReference type="ChEBI" id="CHEBI:58274"/>
        <dbReference type="ChEBI" id="CHEBI:456216"/>
        <dbReference type="EC" id="2.7.2.11"/>
    </reaction>
</comment>
<comment type="pathway">
    <text evidence="1">Amino-acid biosynthesis; L-proline biosynthesis; L-glutamate 5-semialdehyde from L-glutamate: step 1/2.</text>
</comment>
<comment type="subcellular location">
    <subcellularLocation>
        <location evidence="1">Cytoplasm</location>
    </subcellularLocation>
</comment>
<comment type="similarity">
    <text evidence="1">Belongs to the glutamate 5-kinase family.</text>
</comment>
<dbReference type="EC" id="2.7.2.11" evidence="1"/>
<dbReference type="EMBL" id="CP000946">
    <property type="protein sequence ID" value="ACA78960.1"/>
    <property type="molecule type" value="Genomic_DNA"/>
</dbReference>
<dbReference type="RefSeq" id="WP_001285288.1">
    <property type="nucleotide sequence ID" value="NZ_MTFT01000010.1"/>
</dbReference>
<dbReference type="SMR" id="B1J0Z2"/>
<dbReference type="GeneID" id="93777151"/>
<dbReference type="KEGG" id="ecl:EcolC_3339"/>
<dbReference type="HOGENOM" id="CLU_025400_2_0_6"/>
<dbReference type="UniPathway" id="UPA00098">
    <property type="reaction ID" value="UER00359"/>
</dbReference>
<dbReference type="GO" id="GO:0005829">
    <property type="term" value="C:cytosol"/>
    <property type="evidence" value="ECO:0007669"/>
    <property type="project" value="TreeGrafter"/>
</dbReference>
<dbReference type="GO" id="GO:0005524">
    <property type="term" value="F:ATP binding"/>
    <property type="evidence" value="ECO:0007669"/>
    <property type="project" value="UniProtKB-KW"/>
</dbReference>
<dbReference type="GO" id="GO:0004349">
    <property type="term" value="F:glutamate 5-kinase activity"/>
    <property type="evidence" value="ECO:0007669"/>
    <property type="project" value="UniProtKB-UniRule"/>
</dbReference>
<dbReference type="GO" id="GO:0003723">
    <property type="term" value="F:RNA binding"/>
    <property type="evidence" value="ECO:0007669"/>
    <property type="project" value="InterPro"/>
</dbReference>
<dbReference type="GO" id="GO:0055129">
    <property type="term" value="P:L-proline biosynthetic process"/>
    <property type="evidence" value="ECO:0007669"/>
    <property type="project" value="UniProtKB-UniRule"/>
</dbReference>
<dbReference type="CDD" id="cd04242">
    <property type="entry name" value="AAK_G5K_ProB"/>
    <property type="match status" value="1"/>
</dbReference>
<dbReference type="CDD" id="cd21157">
    <property type="entry name" value="PUA_G5K"/>
    <property type="match status" value="1"/>
</dbReference>
<dbReference type="FunFam" id="2.30.130.10:FF:000003">
    <property type="entry name" value="Glutamate 5-kinase"/>
    <property type="match status" value="1"/>
</dbReference>
<dbReference type="FunFam" id="3.40.1160.10:FF:000006">
    <property type="entry name" value="Glutamate 5-kinase"/>
    <property type="match status" value="1"/>
</dbReference>
<dbReference type="Gene3D" id="3.40.1160.10">
    <property type="entry name" value="Acetylglutamate kinase-like"/>
    <property type="match status" value="2"/>
</dbReference>
<dbReference type="Gene3D" id="2.30.130.10">
    <property type="entry name" value="PUA domain"/>
    <property type="match status" value="1"/>
</dbReference>
<dbReference type="HAMAP" id="MF_00456">
    <property type="entry name" value="ProB"/>
    <property type="match status" value="1"/>
</dbReference>
<dbReference type="InterPro" id="IPR036393">
    <property type="entry name" value="AceGlu_kinase-like_sf"/>
</dbReference>
<dbReference type="InterPro" id="IPR001048">
    <property type="entry name" value="Asp/Glu/Uridylate_kinase"/>
</dbReference>
<dbReference type="InterPro" id="IPR041739">
    <property type="entry name" value="G5K_ProB"/>
</dbReference>
<dbReference type="InterPro" id="IPR001057">
    <property type="entry name" value="Glu/AcGlu_kinase"/>
</dbReference>
<dbReference type="InterPro" id="IPR011529">
    <property type="entry name" value="Glu_5kinase"/>
</dbReference>
<dbReference type="InterPro" id="IPR005715">
    <property type="entry name" value="Glu_5kinase/COase_Synthase"/>
</dbReference>
<dbReference type="InterPro" id="IPR019797">
    <property type="entry name" value="Glutamate_5-kinase_CS"/>
</dbReference>
<dbReference type="InterPro" id="IPR002478">
    <property type="entry name" value="PUA"/>
</dbReference>
<dbReference type="InterPro" id="IPR015947">
    <property type="entry name" value="PUA-like_sf"/>
</dbReference>
<dbReference type="InterPro" id="IPR036974">
    <property type="entry name" value="PUA_sf"/>
</dbReference>
<dbReference type="NCBIfam" id="TIGR01027">
    <property type="entry name" value="proB"/>
    <property type="match status" value="1"/>
</dbReference>
<dbReference type="PANTHER" id="PTHR43654">
    <property type="entry name" value="GLUTAMATE 5-KINASE"/>
    <property type="match status" value="1"/>
</dbReference>
<dbReference type="PANTHER" id="PTHR43654:SF1">
    <property type="entry name" value="ISOPENTENYL PHOSPHATE KINASE"/>
    <property type="match status" value="1"/>
</dbReference>
<dbReference type="Pfam" id="PF00696">
    <property type="entry name" value="AA_kinase"/>
    <property type="match status" value="1"/>
</dbReference>
<dbReference type="Pfam" id="PF01472">
    <property type="entry name" value="PUA"/>
    <property type="match status" value="1"/>
</dbReference>
<dbReference type="PIRSF" id="PIRSF000729">
    <property type="entry name" value="GK"/>
    <property type="match status" value="1"/>
</dbReference>
<dbReference type="PRINTS" id="PR00474">
    <property type="entry name" value="GLU5KINASE"/>
</dbReference>
<dbReference type="SMART" id="SM00359">
    <property type="entry name" value="PUA"/>
    <property type="match status" value="1"/>
</dbReference>
<dbReference type="SUPFAM" id="SSF53633">
    <property type="entry name" value="Carbamate kinase-like"/>
    <property type="match status" value="1"/>
</dbReference>
<dbReference type="SUPFAM" id="SSF88697">
    <property type="entry name" value="PUA domain-like"/>
    <property type="match status" value="1"/>
</dbReference>
<dbReference type="PROSITE" id="PS00902">
    <property type="entry name" value="GLUTAMATE_5_KINASE"/>
    <property type="match status" value="1"/>
</dbReference>
<dbReference type="PROSITE" id="PS50890">
    <property type="entry name" value="PUA"/>
    <property type="match status" value="1"/>
</dbReference>
<gene>
    <name evidence="1" type="primary">proB</name>
    <name type="ordered locus">EcolC_3339</name>
</gene>
<sequence length="367" mass="39057">MSDSQTLVVKLGTSVLTGGSRRLNRAHIVELVRQCAQLHAAGHRIVIVTSGAIAAGREHLGYPELPATIASKQLLAAVGQSRLIQLWEQLFSIYGIHVGQMLLTRADMEDRERFLNARDTLRALLDNNIVPVINENDAVATAEIKVGDNDNLSALAAILAGADKLLLLTDQKGLYTADPRSNPQAELIKDVYGIDDALRAIAGDSVSGLGTGGMSTKLQAADVACRAGIDTIIAAGSKPGVIGDVMEGISVGTLFHAQATPLENRKRWIFGAPPAGEITVDEGATAAILERGSSLLPKGIKSVTGNFSRGEVIRICNLEGRDIAHGVSRYNSDALRRIAGHHSQEIDAILGYEYGPVAVHRDDMITR</sequence>
<proteinExistence type="inferred from homology"/>
<protein>
    <recommendedName>
        <fullName evidence="1">Glutamate 5-kinase</fullName>
        <ecNumber evidence="1">2.7.2.11</ecNumber>
    </recommendedName>
    <alternativeName>
        <fullName evidence="1">Gamma-glutamyl kinase</fullName>
        <shortName evidence="1">GK</shortName>
    </alternativeName>
</protein>
<organism>
    <name type="scientific">Escherichia coli (strain ATCC 8739 / DSM 1576 / NBRC 3972 / NCIMB 8545 / WDCM 00012 / Crooks)</name>
    <dbReference type="NCBI Taxonomy" id="481805"/>
    <lineage>
        <taxon>Bacteria</taxon>
        <taxon>Pseudomonadati</taxon>
        <taxon>Pseudomonadota</taxon>
        <taxon>Gammaproteobacteria</taxon>
        <taxon>Enterobacterales</taxon>
        <taxon>Enterobacteriaceae</taxon>
        <taxon>Escherichia</taxon>
    </lineage>
</organism>